<name>MURE_CHLPN</name>
<gene>
    <name evidence="1" type="primary">murE</name>
    <name type="ordered locus">CPn_0418</name>
    <name type="ordered locus">CP_0336</name>
    <name type="ordered locus">CpB0434</name>
</gene>
<proteinExistence type="inferred from homology"/>
<accession>Q9Z8C5</accession>
<accession>Q9JQA1</accession>
<feature type="chain" id="PRO_0000101881" description="UDP-N-acetylmuramoyl-L-alanyl-D-glutamate--2,6-diaminopimelate ligase">
    <location>
        <begin position="1"/>
        <end position="483"/>
    </location>
</feature>
<feature type="short sequence motif" description="Meso-diaminopimelate recognition motif">
    <location>
        <begin position="403"/>
        <end position="406"/>
    </location>
</feature>
<feature type="binding site" evidence="1">
    <location>
        <position position="30"/>
    </location>
    <ligand>
        <name>UDP-N-acetyl-alpha-D-muramoyl-L-alanyl-D-glutamate</name>
        <dbReference type="ChEBI" id="CHEBI:83900"/>
    </ligand>
</feature>
<feature type="binding site" evidence="1">
    <location>
        <begin position="109"/>
        <end position="115"/>
    </location>
    <ligand>
        <name>ATP</name>
        <dbReference type="ChEBI" id="CHEBI:30616"/>
    </ligand>
</feature>
<feature type="binding site" evidence="1">
    <location>
        <begin position="151"/>
        <end position="152"/>
    </location>
    <ligand>
        <name>UDP-N-acetyl-alpha-D-muramoyl-L-alanyl-D-glutamate</name>
        <dbReference type="ChEBI" id="CHEBI:83900"/>
    </ligand>
</feature>
<feature type="binding site" evidence="1">
    <location>
        <position position="178"/>
    </location>
    <ligand>
        <name>UDP-N-acetyl-alpha-D-muramoyl-L-alanyl-D-glutamate</name>
        <dbReference type="ChEBI" id="CHEBI:83900"/>
    </ligand>
</feature>
<feature type="binding site" evidence="1">
    <location>
        <position position="186"/>
    </location>
    <ligand>
        <name>UDP-N-acetyl-alpha-D-muramoyl-L-alanyl-D-glutamate</name>
        <dbReference type="ChEBI" id="CHEBI:83900"/>
    </ligand>
</feature>
<feature type="binding site" evidence="1">
    <location>
        <position position="380"/>
    </location>
    <ligand>
        <name>meso-2,6-diaminopimelate</name>
        <dbReference type="ChEBI" id="CHEBI:57791"/>
    </ligand>
</feature>
<feature type="binding site" evidence="1">
    <location>
        <begin position="403"/>
        <end position="406"/>
    </location>
    <ligand>
        <name>meso-2,6-diaminopimelate</name>
        <dbReference type="ChEBI" id="CHEBI:57791"/>
    </ligand>
</feature>
<feature type="binding site" evidence="1">
    <location>
        <position position="453"/>
    </location>
    <ligand>
        <name>meso-2,6-diaminopimelate</name>
        <dbReference type="ChEBI" id="CHEBI:57791"/>
    </ligand>
</feature>
<feature type="binding site" evidence="1">
    <location>
        <position position="457"/>
    </location>
    <ligand>
        <name>meso-2,6-diaminopimelate</name>
        <dbReference type="ChEBI" id="CHEBI:57791"/>
    </ligand>
</feature>
<feature type="modified residue" description="N6-carboxylysine" evidence="1">
    <location>
        <position position="218"/>
    </location>
</feature>
<dbReference type="EC" id="6.3.2.13" evidence="1"/>
<dbReference type="EMBL" id="AE001363">
    <property type="protein sequence ID" value="AAD18562.1"/>
    <property type="molecule type" value="Genomic_DNA"/>
</dbReference>
<dbReference type="EMBL" id="AE002161">
    <property type="protein sequence ID" value="AAF38190.1"/>
    <property type="molecule type" value="Genomic_DNA"/>
</dbReference>
<dbReference type="EMBL" id="BA000008">
    <property type="protein sequence ID" value="BAA98626.1"/>
    <property type="molecule type" value="Genomic_DNA"/>
</dbReference>
<dbReference type="EMBL" id="AE009440">
    <property type="protein sequence ID" value="AAP98365.1"/>
    <property type="molecule type" value="Genomic_DNA"/>
</dbReference>
<dbReference type="PIR" id="D72080">
    <property type="entry name" value="D72080"/>
</dbReference>
<dbReference type="PIR" id="H86542">
    <property type="entry name" value="H86542"/>
</dbReference>
<dbReference type="RefSeq" id="NP_224618.1">
    <property type="nucleotide sequence ID" value="NC_000922.1"/>
</dbReference>
<dbReference type="RefSeq" id="WP_010883061.1">
    <property type="nucleotide sequence ID" value="NZ_LN847257.1"/>
</dbReference>
<dbReference type="SMR" id="Q9Z8C5"/>
<dbReference type="STRING" id="406984.CPK_ORF00927"/>
<dbReference type="GeneID" id="45050465"/>
<dbReference type="KEGG" id="cpa:CP_0336"/>
<dbReference type="KEGG" id="cpj:murE"/>
<dbReference type="KEGG" id="cpn:CPn_0418"/>
<dbReference type="KEGG" id="cpt:CpB0434"/>
<dbReference type="PATRIC" id="fig|115713.3.peg.462"/>
<dbReference type="eggNOG" id="COG0769">
    <property type="taxonomic scope" value="Bacteria"/>
</dbReference>
<dbReference type="HOGENOM" id="CLU_022291_4_1_0"/>
<dbReference type="OrthoDB" id="9800958at2"/>
<dbReference type="UniPathway" id="UPA00219"/>
<dbReference type="Proteomes" id="UP000000583">
    <property type="component" value="Chromosome"/>
</dbReference>
<dbReference type="Proteomes" id="UP000000801">
    <property type="component" value="Chromosome"/>
</dbReference>
<dbReference type="GO" id="GO:0005737">
    <property type="term" value="C:cytoplasm"/>
    <property type="evidence" value="ECO:0007669"/>
    <property type="project" value="UniProtKB-SubCell"/>
</dbReference>
<dbReference type="GO" id="GO:0005524">
    <property type="term" value="F:ATP binding"/>
    <property type="evidence" value="ECO:0007669"/>
    <property type="project" value="UniProtKB-UniRule"/>
</dbReference>
<dbReference type="GO" id="GO:0000287">
    <property type="term" value="F:magnesium ion binding"/>
    <property type="evidence" value="ECO:0007669"/>
    <property type="project" value="UniProtKB-UniRule"/>
</dbReference>
<dbReference type="GO" id="GO:0008765">
    <property type="term" value="F:UDP-N-acetylmuramoylalanyl-D-glutamate-2,6-diaminopimelate ligase activity"/>
    <property type="evidence" value="ECO:0007669"/>
    <property type="project" value="UniProtKB-UniRule"/>
</dbReference>
<dbReference type="GO" id="GO:0051301">
    <property type="term" value="P:cell division"/>
    <property type="evidence" value="ECO:0007669"/>
    <property type="project" value="UniProtKB-KW"/>
</dbReference>
<dbReference type="GO" id="GO:0071555">
    <property type="term" value="P:cell wall organization"/>
    <property type="evidence" value="ECO:0007669"/>
    <property type="project" value="UniProtKB-KW"/>
</dbReference>
<dbReference type="GO" id="GO:0009252">
    <property type="term" value="P:peptidoglycan biosynthetic process"/>
    <property type="evidence" value="ECO:0007669"/>
    <property type="project" value="UniProtKB-UniRule"/>
</dbReference>
<dbReference type="GO" id="GO:0008360">
    <property type="term" value="P:regulation of cell shape"/>
    <property type="evidence" value="ECO:0007669"/>
    <property type="project" value="UniProtKB-KW"/>
</dbReference>
<dbReference type="Gene3D" id="3.90.190.20">
    <property type="entry name" value="Mur ligase, C-terminal domain"/>
    <property type="match status" value="1"/>
</dbReference>
<dbReference type="Gene3D" id="3.40.1190.10">
    <property type="entry name" value="Mur-like, catalytic domain"/>
    <property type="match status" value="1"/>
</dbReference>
<dbReference type="Gene3D" id="3.40.1390.10">
    <property type="entry name" value="MurE/MurF, N-terminal domain"/>
    <property type="match status" value="1"/>
</dbReference>
<dbReference type="HAMAP" id="MF_00208">
    <property type="entry name" value="MurE"/>
    <property type="match status" value="1"/>
</dbReference>
<dbReference type="InterPro" id="IPR036565">
    <property type="entry name" value="Mur-like_cat_sf"/>
</dbReference>
<dbReference type="InterPro" id="IPR004101">
    <property type="entry name" value="Mur_ligase_C"/>
</dbReference>
<dbReference type="InterPro" id="IPR036615">
    <property type="entry name" value="Mur_ligase_C_dom_sf"/>
</dbReference>
<dbReference type="InterPro" id="IPR013221">
    <property type="entry name" value="Mur_ligase_cen"/>
</dbReference>
<dbReference type="InterPro" id="IPR000713">
    <property type="entry name" value="Mur_ligase_N"/>
</dbReference>
<dbReference type="InterPro" id="IPR035911">
    <property type="entry name" value="MurE/MurF_N"/>
</dbReference>
<dbReference type="InterPro" id="IPR005761">
    <property type="entry name" value="UDP-N-AcMur-Glu-dNH2Pim_ligase"/>
</dbReference>
<dbReference type="NCBIfam" id="TIGR01085">
    <property type="entry name" value="murE"/>
    <property type="match status" value="1"/>
</dbReference>
<dbReference type="NCBIfam" id="NF001126">
    <property type="entry name" value="PRK00139.1-4"/>
    <property type="match status" value="1"/>
</dbReference>
<dbReference type="PANTHER" id="PTHR23135">
    <property type="entry name" value="MUR LIGASE FAMILY MEMBER"/>
    <property type="match status" value="1"/>
</dbReference>
<dbReference type="PANTHER" id="PTHR23135:SF4">
    <property type="entry name" value="UDP-N-ACETYLMURAMOYL-L-ALANYL-D-GLUTAMATE--2,6-DIAMINOPIMELATE LIGASE MURE HOMOLOG, CHLOROPLASTIC"/>
    <property type="match status" value="1"/>
</dbReference>
<dbReference type="Pfam" id="PF01225">
    <property type="entry name" value="Mur_ligase"/>
    <property type="match status" value="1"/>
</dbReference>
<dbReference type="Pfam" id="PF02875">
    <property type="entry name" value="Mur_ligase_C"/>
    <property type="match status" value="1"/>
</dbReference>
<dbReference type="Pfam" id="PF08245">
    <property type="entry name" value="Mur_ligase_M"/>
    <property type="match status" value="1"/>
</dbReference>
<dbReference type="SUPFAM" id="SSF53623">
    <property type="entry name" value="MurD-like peptide ligases, catalytic domain"/>
    <property type="match status" value="1"/>
</dbReference>
<dbReference type="SUPFAM" id="SSF53244">
    <property type="entry name" value="MurD-like peptide ligases, peptide-binding domain"/>
    <property type="match status" value="1"/>
</dbReference>
<dbReference type="SUPFAM" id="SSF63418">
    <property type="entry name" value="MurE/MurF N-terminal domain"/>
    <property type="match status" value="1"/>
</dbReference>
<keyword id="KW-0067">ATP-binding</keyword>
<keyword id="KW-0131">Cell cycle</keyword>
<keyword id="KW-0132">Cell division</keyword>
<keyword id="KW-0133">Cell shape</keyword>
<keyword id="KW-0961">Cell wall biogenesis/degradation</keyword>
<keyword id="KW-0963">Cytoplasm</keyword>
<keyword id="KW-0436">Ligase</keyword>
<keyword id="KW-0460">Magnesium</keyword>
<keyword id="KW-0547">Nucleotide-binding</keyword>
<keyword id="KW-0573">Peptidoglycan synthesis</keyword>
<evidence type="ECO:0000255" key="1">
    <source>
        <dbReference type="HAMAP-Rule" id="MF_00208"/>
    </source>
</evidence>
<comment type="function">
    <text evidence="1">Catalyzes the addition of meso-diaminopimelic acid to the nucleotide precursor UDP-N-acetylmuramoyl-L-alanyl-D-glutamate (UMAG) in the biosynthesis of bacterial cell-wall peptidoglycan.</text>
</comment>
<comment type="catalytic activity">
    <reaction evidence="1">
        <text>UDP-N-acetyl-alpha-D-muramoyl-L-alanyl-D-glutamate + meso-2,6-diaminopimelate + ATP = UDP-N-acetyl-alpha-D-muramoyl-L-alanyl-gamma-D-glutamyl-meso-2,6-diaminopimelate + ADP + phosphate + H(+)</text>
        <dbReference type="Rhea" id="RHEA:23676"/>
        <dbReference type="ChEBI" id="CHEBI:15378"/>
        <dbReference type="ChEBI" id="CHEBI:30616"/>
        <dbReference type="ChEBI" id="CHEBI:43474"/>
        <dbReference type="ChEBI" id="CHEBI:57791"/>
        <dbReference type="ChEBI" id="CHEBI:83900"/>
        <dbReference type="ChEBI" id="CHEBI:83905"/>
        <dbReference type="ChEBI" id="CHEBI:456216"/>
        <dbReference type="EC" id="6.3.2.13"/>
    </reaction>
</comment>
<comment type="cofactor">
    <cofactor evidence="1">
        <name>Mg(2+)</name>
        <dbReference type="ChEBI" id="CHEBI:18420"/>
    </cofactor>
</comment>
<comment type="pathway">
    <text evidence="1">Cell wall biogenesis; peptidoglycan biosynthesis.</text>
</comment>
<comment type="subcellular location">
    <subcellularLocation>
        <location evidence="1">Cytoplasm</location>
    </subcellularLocation>
</comment>
<comment type="PTM">
    <text evidence="1">Carboxylation is probably crucial for Mg(2+) binding and, consequently, for the gamma-phosphate positioning of ATP.</text>
</comment>
<comment type="similarity">
    <text evidence="1">Belongs to the MurCDEF family. MurE subfamily.</text>
</comment>
<sequence>MDLKELLHGVQAKIYGKVRPLEVRNLTRDSRCVSVGDIFIAHKGQRYDGNDFAVDALANGAIAIASSLYNPFLSVVQIITPNLEELEAELSAKYYEYPSSKLHTIGVTGTNGKTTVTCLIKALLDSYQKPSGLLGTIEHILGEGVIKDGFTTPTPALLQKYLATMVRQNRDAVVMEVSSIGLASGRVAYTNFDTAVLTNITLDHLDFHGTFETYVAAKAKLFSLVPPSGMVVINTDSPYASQCIESAKAPVITYGIESAADYRATDIQLSSSGTKYTLVYGDQKIACSSSFIGKYNVYNLLAAISTVHASLRCDLEDLLEKIGLCQPPPGRLDPVLMGPCPVYIDYAHTPDALDNVLTGLHELLPEGGRLIVVFGCGGDRDRSKRKLMAQVVERYGFAVVTSDNPRSEPPEDIVNEICDGFYSKNYFIEIDRKQAITYALSIASDRDIVLIAGKGHEAYQIFKHQTVAFDDKQTVCEVLASYV</sequence>
<protein>
    <recommendedName>
        <fullName evidence="1">UDP-N-acetylmuramoyl-L-alanyl-D-glutamate--2,6-diaminopimelate ligase</fullName>
        <ecNumber evidence="1">6.3.2.13</ecNumber>
    </recommendedName>
    <alternativeName>
        <fullName evidence="1">Meso-A2pm-adding enzyme</fullName>
    </alternativeName>
    <alternativeName>
        <fullName evidence="1">Meso-diaminopimelate-adding enzyme</fullName>
    </alternativeName>
    <alternativeName>
        <fullName evidence="1">UDP-MurNAc-L-Ala-D-Glu:meso-diaminopimelate ligase</fullName>
    </alternativeName>
    <alternativeName>
        <fullName evidence="1">UDP-MurNAc-tripeptide synthetase</fullName>
    </alternativeName>
    <alternativeName>
        <fullName evidence="1">UDP-N-acetylmuramyl-tripeptide synthetase</fullName>
    </alternativeName>
</protein>
<organism>
    <name type="scientific">Chlamydia pneumoniae</name>
    <name type="common">Chlamydophila pneumoniae</name>
    <dbReference type="NCBI Taxonomy" id="83558"/>
    <lineage>
        <taxon>Bacteria</taxon>
        <taxon>Pseudomonadati</taxon>
        <taxon>Chlamydiota</taxon>
        <taxon>Chlamydiia</taxon>
        <taxon>Chlamydiales</taxon>
        <taxon>Chlamydiaceae</taxon>
        <taxon>Chlamydia/Chlamydophila group</taxon>
        <taxon>Chlamydia</taxon>
    </lineage>
</organism>
<reference key="1">
    <citation type="journal article" date="1999" name="Nat. Genet.">
        <title>Comparative genomes of Chlamydia pneumoniae and C. trachomatis.</title>
        <authorList>
            <person name="Kalman S."/>
            <person name="Mitchell W.P."/>
            <person name="Marathe R."/>
            <person name="Lammel C.J."/>
            <person name="Fan J."/>
            <person name="Hyman R.W."/>
            <person name="Olinger L."/>
            <person name="Grimwood J."/>
            <person name="Davis R.W."/>
            <person name="Stephens R.S."/>
        </authorList>
    </citation>
    <scope>NUCLEOTIDE SEQUENCE [LARGE SCALE GENOMIC DNA]</scope>
    <source>
        <strain>CWL029</strain>
    </source>
</reference>
<reference key="2">
    <citation type="journal article" date="2000" name="Nucleic Acids Res.">
        <title>Genome sequences of Chlamydia trachomatis MoPn and Chlamydia pneumoniae AR39.</title>
        <authorList>
            <person name="Read T.D."/>
            <person name="Brunham R.C."/>
            <person name="Shen C."/>
            <person name="Gill S.R."/>
            <person name="Heidelberg J.F."/>
            <person name="White O."/>
            <person name="Hickey E.K."/>
            <person name="Peterson J.D."/>
            <person name="Utterback T.R."/>
            <person name="Berry K.J."/>
            <person name="Bass S."/>
            <person name="Linher K.D."/>
            <person name="Weidman J.F."/>
            <person name="Khouri H.M."/>
            <person name="Craven B."/>
            <person name="Bowman C."/>
            <person name="Dodson R.J."/>
            <person name="Gwinn M.L."/>
            <person name="Nelson W.C."/>
            <person name="DeBoy R.T."/>
            <person name="Kolonay J.F."/>
            <person name="McClarty G."/>
            <person name="Salzberg S.L."/>
            <person name="Eisen J.A."/>
            <person name="Fraser C.M."/>
        </authorList>
    </citation>
    <scope>NUCLEOTIDE SEQUENCE [LARGE SCALE GENOMIC DNA]</scope>
    <source>
        <strain>AR39</strain>
    </source>
</reference>
<reference key="3">
    <citation type="journal article" date="2000" name="Nucleic Acids Res.">
        <title>Comparison of whole genome sequences of Chlamydia pneumoniae J138 from Japan and CWL029 from USA.</title>
        <authorList>
            <person name="Shirai M."/>
            <person name="Hirakawa H."/>
            <person name="Kimoto M."/>
            <person name="Tabuchi M."/>
            <person name="Kishi F."/>
            <person name="Ouchi K."/>
            <person name="Shiba T."/>
            <person name="Ishii K."/>
            <person name="Hattori M."/>
            <person name="Kuhara S."/>
            <person name="Nakazawa T."/>
        </authorList>
    </citation>
    <scope>NUCLEOTIDE SEQUENCE [LARGE SCALE GENOMIC DNA]</scope>
    <source>
        <strain>J138</strain>
    </source>
</reference>
<reference key="4">
    <citation type="submission" date="2002-05" db="EMBL/GenBank/DDBJ databases">
        <title>The genome sequence of Chlamydia pneumoniae TW183 and comparison with other Chlamydia strains based on whole genome sequence analysis.</title>
        <authorList>
            <person name="Geng M.M."/>
            <person name="Schuhmacher A."/>
            <person name="Muehldorfer I."/>
            <person name="Bensch K.W."/>
            <person name="Schaefer K.P."/>
            <person name="Schneider S."/>
            <person name="Pohl T."/>
            <person name="Essig A."/>
            <person name="Marre R."/>
            <person name="Melchers K."/>
        </authorList>
    </citation>
    <scope>NUCLEOTIDE SEQUENCE [LARGE SCALE GENOMIC DNA]</scope>
    <source>
        <strain>TW-183</strain>
    </source>
</reference>